<protein>
    <recommendedName>
        <fullName evidence="1">Integration host factor subunit alpha</fullName>
        <shortName evidence="1">IHF-alpha</shortName>
    </recommendedName>
</protein>
<name>IHFA_PSEA8</name>
<evidence type="ECO:0000255" key="1">
    <source>
        <dbReference type="HAMAP-Rule" id="MF_00380"/>
    </source>
</evidence>
<evidence type="ECO:0000256" key="2">
    <source>
        <dbReference type="SAM" id="MobiDB-lite"/>
    </source>
</evidence>
<reference key="1">
    <citation type="journal article" date="2009" name="Genome Res.">
        <title>Newly introduced genomic prophage islands are critical determinants of in vivo competitiveness in the Liverpool epidemic strain of Pseudomonas aeruginosa.</title>
        <authorList>
            <person name="Winstanley C."/>
            <person name="Langille M.G.I."/>
            <person name="Fothergill J.L."/>
            <person name="Kukavica-Ibrulj I."/>
            <person name="Paradis-Bleau C."/>
            <person name="Sanschagrin F."/>
            <person name="Thomson N.R."/>
            <person name="Winsor G.L."/>
            <person name="Quail M.A."/>
            <person name="Lennard N."/>
            <person name="Bignell A."/>
            <person name="Clarke L."/>
            <person name="Seeger K."/>
            <person name="Saunders D."/>
            <person name="Harris D."/>
            <person name="Parkhill J."/>
            <person name="Hancock R.E.W."/>
            <person name="Brinkman F.S.L."/>
            <person name="Levesque R.C."/>
        </authorList>
    </citation>
    <scope>NUCLEOTIDE SEQUENCE [LARGE SCALE GENOMIC DNA]</scope>
    <source>
        <strain>LESB58</strain>
    </source>
</reference>
<feature type="chain" id="PRO_1000122154" description="Integration host factor subunit alpha">
    <location>
        <begin position="1"/>
        <end position="100"/>
    </location>
</feature>
<feature type="region of interest" description="Disordered" evidence="2">
    <location>
        <begin position="53"/>
        <end position="73"/>
    </location>
</feature>
<dbReference type="EMBL" id="FM209186">
    <property type="protein sequence ID" value="CAW27072.1"/>
    <property type="molecule type" value="Genomic_DNA"/>
</dbReference>
<dbReference type="RefSeq" id="WP_012613949.1">
    <property type="nucleotide sequence ID" value="NC_011770.1"/>
</dbReference>
<dbReference type="SMR" id="B7V312"/>
<dbReference type="KEGG" id="pag:PLES_23451"/>
<dbReference type="HOGENOM" id="CLU_105066_1_3_6"/>
<dbReference type="GO" id="GO:0005829">
    <property type="term" value="C:cytosol"/>
    <property type="evidence" value="ECO:0007669"/>
    <property type="project" value="TreeGrafter"/>
</dbReference>
<dbReference type="GO" id="GO:0003677">
    <property type="term" value="F:DNA binding"/>
    <property type="evidence" value="ECO:0007669"/>
    <property type="project" value="UniProtKB-UniRule"/>
</dbReference>
<dbReference type="GO" id="GO:0030527">
    <property type="term" value="F:structural constituent of chromatin"/>
    <property type="evidence" value="ECO:0007669"/>
    <property type="project" value="InterPro"/>
</dbReference>
<dbReference type="GO" id="GO:0006310">
    <property type="term" value="P:DNA recombination"/>
    <property type="evidence" value="ECO:0007669"/>
    <property type="project" value="UniProtKB-UniRule"/>
</dbReference>
<dbReference type="GO" id="GO:0009893">
    <property type="term" value="P:positive regulation of metabolic process"/>
    <property type="evidence" value="ECO:0007669"/>
    <property type="project" value="UniProtKB-ARBA"/>
</dbReference>
<dbReference type="GO" id="GO:0006355">
    <property type="term" value="P:regulation of DNA-templated transcription"/>
    <property type="evidence" value="ECO:0007669"/>
    <property type="project" value="UniProtKB-UniRule"/>
</dbReference>
<dbReference type="GO" id="GO:0006417">
    <property type="term" value="P:regulation of translation"/>
    <property type="evidence" value="ECO:0007669"/>
    <property type="project" value="UniProtKB-UniRule"/>
</dbReference>
<dbReference type="CDD" id="cd13835">
    <property type="entry name" value="IHF_A"/>
    <property type="match status" value="1"/>
</dbReference>
<dbReference type="FunFam" id="4.10.520.10:FF:000002">
    <property type="entry name" value="Integration host factor subunit alpha"/>
    <property type="match status" value="1"/>
</dbReference>
<dbReference type="Gene3D" id="4.10.520.10">
    <property type="entry name" value="IHF-like DNA-binding proteins"/>
    <property type="match status" value="1"/>
</dbReference>
<dbReference type="HAMAP" id="MF_00380">
    <property type="entry name" value="IHF_alpha"/>
    <property type="match status" value="1"/>
</dbReference>
<dbReference type="InterPro" id="IPR000119">
    <property type="entry name" value="Hist_DNA-bd"/>
</dbReference>
<dbReference type="InterPro" id="IPR020816">
    <property type="entry name" value="Histone-like_DNA-bd_CS"/>
</dbReference>
<dbReference type="InterPro" id="IPR010992">
    <property type="entry name" value="IHF-like_DNA-bd_dom_sf"/>
</dbReference>
<dbReference type="InterPro" id="IPR005684">
    <property type="entry name" value="IHF_alpha"/>
</dbReference>
<dbReference type="NCBIfam" id="TIGR00987">
    <property type="entry name" value="himA"/>
    <property type="match status" value="1"/>
</dbReference>
<dbReference type="NCBIfam" id="NF001401">
    <property type="entry name" value="PRK00285.1"/>
    <property type="match status" value="1"/>
</dbReference>
<dbReference type="PANTHER" id="PTHR33175">
    <property type="entry name" value="DNA-BINDING PROTEIN HU"/>
    <property type="match status" value="1"/>
</dbReference>
<dbReference type="PANTHER" id="PTHR33175:SF2">
    <property type="entry name" value="INTEGRATION HOST FACTOR SUBUNIT ALPHA"/>
    <property type="match status" value="1"/>
</dbReference>
<dbReference type="Pfam" id="PF00216">
    <property type="entry name" value="Bac_DNA_binding"/>
    <property type="match status" value="1"/>
</dbReference>
<dbReference type="PRINTS" id="PR01727">
    <property type="entry name" value="DNABINDINGHU"/>
</dbReference>
<dbReference type="SMART" id="SM00411">
    <property type="entry name" value="BHL"/>
    <property type="match status" value="1"/>
</dbReference>
<dbReference type="SUPFAM" id="SSF47729">
    <property type="entry name" value="IHF-like DNA-binding proteins"/>
    <property type="match status" value="1"/>
</dbReference>
<dbReference type="PROSITE" id="PS00045">
    <property type="entry name" value="HISTONE_LIKE"/>
    <property type="match status" value="1"/>
</dbReference>
<organism>
    <name type="scientific">Pseudomonas aeruginosa (strain LESB58)</name>
    <dbReference type="NCBI Taxonomy" id="557722"/>
    <lineage>
        <taxon>Bacteria</taxon>
        <taxon>Pseudomonadati</taxon>
        <taxon>Pseudomonadota</taxon>
        <taxon>Gammaproteobacteria</taxon>
        <taxon>Pseudomonadales</taxon>
        <taxon>Pseudomonadaceae</taxon>
        <taxon>Pseudomonas</taxon>
    </lineage>
</organism>
<accession>B7V312</accession>
<proteinExistence type="inferred from homology"/>
<sequence>MGALTKAEIAERLYEELGLNKREAKELVELFFEEIRQALEQNEQVKLSGFGNFDLRDKRQRPGRNPKTGEEIPITARRVVTFRPGQKLKARVEAYAGTKS</sequence>
<keyword id="KW-0233">DNA recombination</keyword>
<keyword id="KW-0238">DNA-binding</keyword>
<keyword id="KW-0804">Transcription</keyword>
<keyword id="KW-0805">Transcription regulation</keyword>
<keyword id="KW-0810">Translation regulation</keyword>
<comment type="function">
    <text evidence="1">This protein is one of the two subunits of integration host factor, a specific DNA-binding protein that functions in genetic recombination as well as in transcriptional and translational control.</text>
</comment>
<comment type="subunit">
    <text evidence="1">Heterodimer of an alpha and a beta chain.</text>
</comment>
<comment type="similarity">
    <text evidence="1">Belongs to the bacterial histone-like protein family.</text>
</comment>
<gene>
    <name evidence="1" type="primary">ihfA</name>
    <name evidence="1" type="synonym">himA</name>
    <name type="ordered locus">PLES_23451</name>
</gene>